<feature type="chain" id="PRO_0000432213" description="3,6-anhydro-alpha-L-galactonate cycloisomerase">
    <location>
        <begin position="1"/>
        <end position="362"/>
    </location>
</feature>
<feature type="active site" description="Proton acceptor" evidence="1">
    <location>
        <position position="169"/>
    </location>
</feature>
<feature type="active site" description="Proton donor/acceptor" evidence="1">
    <location>
        <position position="300"/>
    </location>
</feature>
<feature type="binding site" evidence="1">
    <location>
        <position position="198"/>
    </location>
    <ligand>
        <name>Mg(2+)</name>
        <dbReference type="ChEBI" id="CHEBI:18420"/>
    </ligand>
</feature>
<feature type="binding site" evidence="1">
    <location>
        <position position="224"/>
    </location>
    <ligand>
        <name>Mg(2+)</name>
        <dbReference type="ChEBI" id="CHEBI:18420"/>
    </ligand>
</feature>
<feature type="binding site" evidence="1">
    <location>
        <position position="250"/>
    </location>
    <ligand>
        <name>Mg(2+)</name>
        <dbReference type="ChEBI" id="CHEBI:18420"/>
    </ligand>
</feature>
<feature type="strand" evidence="7">
    <location>
        <begin position="4"/>
        <end position="21"/>
    </location>
</feature>
<feature type="turn" evidence="8">
    <location>
        <begin position="24"/>
        <end position="26"/>
    </location>
</feature>
<feature type="strand" evidence="7">
    <location>
        <begin position="29"/>
        <end position="41"/>
    </location>
</feature>
<feature type="strand" evidence="7">
    <location>
        <begin position="46"/>
        <end position="57"/>
    </location>
</feature>
<feature type="helix" evidence="7">
    <location>
        <begin position="58"/>
        <end position="67"/>
    </location>
</feature>
<feature type="helix" evidence="7">
    <location>
        <begin position="70"/>
        <end position="73"/>
    </location>
</feature>
<feature type="helix" evidence="7">
    <location>
        <begin position="81"/>
        <end position="91"/>
    </location>
</feature>
<feature type="helix" evidence="7">
    <location>
        <begin position="93"/>
        <end position="95"/>
    </location>
</feature>
<feature type="helix" evidence="7">
    <location>
        <begin position="100"/>
        <end position="120"/>
    </location>
</feature>
<feature type="helix" evidence="7">
    <location>
        <begin position="124"/>
        <end position="127"/>
    </location>
</feature>
<feature type="strand" evidence="7">
    <location>
        <begin position="133"/>
        <end position="142"/>
    </location>
</feature>
<feature type="helix" evidence="7">
    <location>
        <begin position="148"/>
        <end position="160"/>
    </location>
</feature>
<feature type="strand" evidence="7">
    <location>
        <begin position="164"/>
        <end position="169"/>
    </location>
</feature>
<feature type="helix" evidence="7">
    <location>
        <begin position="175"/>
        <end position="189"/>
    </location>
</feature>
<feature type="turn" evidence="8">
    <location>
        <begin position="190"/>
        <end position="192"/>
    </location>
</feature>
<feature type="strand" evidence="7">
    <location>
        <begin position="193"/>
        <end position="198"/>
    </location>
</feature>
<feature type="helix" evidence="7">
    <location>
        <begin position="205"/>
        <end position="215"/>
    </location>
</feature>
<feature type="helix" evidence="7">
    <location>
        <begin position="216"/>
        <end position="218"/>
    </location>
</feature>
<feature type="strand" evidence="8">
    <location>
        <begin position="220"/>
        <end position="225"/>
    </location>
</feature>
<feature type="helix" evidence="7">
    <location>
        <begin position="232"/>
        <end position="240"/>
    </location>
</feature>
<feature type="strand" evidence="8">
    <location>
        <begin position="246"/>
        <end position="248"/>
    </location>
</feature>
<feature type="helix" evidence="7">
    <location>
        <begin position="255"/>
        <end position="264"/>
    </location>
</feature>
<feature type="strand" evidence="7">
    <location>
        <begin position="267"/>
        <end position="270"/>
    </location>
</feature>
<feature type="turn" evidence="7">
    <location>
        <begin position="274"/>
        <end position="278"/>
    </location>
</feature>
<feature type="helix" evidence="7">
    <location>
        <begin position="279"/>
        <end position="292"/>
    </location>
</feature>
<feature type="helix" evidence="7">
    <location>
        <begin position="303"/>
        <end position="313"/>
    </location>
</feature>
<feature type="strand" evidence="7">
    <location>
        <begin position="315"/>
        <end position="320"/>
    </location>
</feature>
<feature type="helix" evidence="7">
    <location>
        <begin position="325"/>
        <end position="328"/>
    </location>
</feature>
<feature type="strand" evidence="7">
    <location>
        <begin position="329"/>
        <end position="331"/>
    </location>
</feature>
<feature type="strand" evidence="8">
    <location>
        <begin position="334"/>
        <end position="336"/>
    </location>
</feature>
<feature type="strand" evidence="7">
    <location>
        <begin position="339"/>
        <end position="341"/>
    </location>
</feature>
<feature type="strand" evidence="7">
    <location>
        <begin position="345"/>
        <end position="349"/>
    </location>
</feature>
<feature type="helix" evidence="7">
    <location>
        <begin position="354"/>
        <end position="357"/>
    </location>
</feature>
<feature type="helix" evidence="7">
    <location>
        <begin position="358"/>
        <end position="360"/>
    </location>
</feature>
<comment type="function">
    <text evidence="2">Involved in the degradation of 3,6-anhydro-L-galactose, which is the major monomeric sugar of red macroalgae. Catalyzes the isomerization of 3,6-anhydrogalactonate (AHGA) to 2-keto-3-deoxy-galactonate (KDGal).</text>
</comment>
<comment type="catalytic activity">
    <reaction evidence="2">
        <text>3,6-anhydro-L-galactonate = 2-dehydro-3-deoxy-L-galactonate</text>
        <dbReference type="Rhea" id="RHEA:21512"/>
        <dbReference type="ChEBI" id="CHEBI:75545"/>
        <dbReference type="ChEBI" id="CHEBI:83435"/>
        <dbReference type="EC" id="5.5.1.25"/>
    </reaction>
</comment>
<comment type="cofactor">
    <cofactor evidence="1">
        <name>Mg(2+)</name>
        <dbReference type="ChEBI" id="CHEBI:18420"/>
    </cofactor>
</comment>
<comment type="biotechnology">
    <text evidence="5">Could be used for bioconversion of red macroalgal biomass into biofuels or industrial chemicals.</text>
</comment>
<comment type="similarity">
    <text evidence="4">Belongs to the mandelate racemase/muconate lactonizing enzyme family.</text>
</comment>
<accession>H2IFX0</accession>
<protein>
    <recommendedName>
        <fullName evidence="4">3,6-anhydro-alpha-L-galactonate cycloisomerase</fullName>
        <shortName evidence="3">AHGA cycloisomerase</shortName>
        <ecNumber evidence="2">5.5.1.25</ecNumber>
    </recommendedName>
</protein>
<reference key="1">
    <citation type="journal article" date="2012" name="J. Bacteriol.">
        <title>Genome sequence of Vibrio sp. strain EJY3, an agarolytic marine bacterium metabolizing 3,6-anhydro-L-galactose as a sole carbon source.</title>
        <authorList>
            <person name="Roh H."/>
            <person name="Yun E.J."/>
            <person name="Lee S."/>
            <person name="Ko H.J."/>
            <person name="Kim S."/>
            <person name="Kim B.Y."/>
            <person name="Song H."/>
            <person name="Lim K.I."/>
            <person name="Kim K.H."/>
            <person name="Choi I.G."/>
        </authorList>
    </citation>
    <scope>NUCLEOTIDE SEQUENCE [LARGE SCALE GENOMIC DNA]</scope>
    <source>
        <strain>EJY3</strain>
    </source>
</reference>
<reference key="2">
    <citation type="journal article" date="2015" name="Environ. Microbiol.">
        <title>The novel catabolic pathway of 3,6-anhydro-L-galactose, the main component of red macroalgae, in a marine bacterium.</title>
        <authorList>
            <person name="Yun E.J."/>
            <person name="Lee S."/>
            <person name="Kim H.T."/>
            <person name="Pelton J.G."/>
            <person name="Kim S."/>
            <person name="Ko H.J."/>
            <person name="Choi I.G."/>
            <person name="Kim K.H."/>
        </authorList>
    </citation>
    <scope>FUNCTION</scope>
    <scope>CATALYTIC ACTIVITY</scope>
    <scope>BIOTECHNOLOGY</scope>
    <source>
        <strain>EJY3</strain>
    </source>
</reference>
<proteinExistence type="evidence at protein level"/>
<name>ACI_VIBSJ</name>
<organism>
    <name type="scientific">Vibrio sp. (strain EJY3)</name>
    <dbReference type="NCBI Taxonomy" id="1116375"/>
    <lineage>
        <taxon>Bacteria</taxon>
        <taxon>Pseudomonadati</taxon>
        <taxon>Pseudomonadota</taxon>
        <taxon>Gammaproteobacteria</taxon>
        <taxon>Vibrionales</taxon>
        <taxon>Vibrionaceae</taxon>
        <taxon>Vibrio</taxon>
    </lineage>
</organism>
<dbReference type="EC" id="5.5.1.25" evidence="2"/>
<dbReference type="EMBL" id="CP003241">
    <property type="protein sequence ID" value="AEX22356.1"/>
    <property type="molecule type" value="Genomic_DNA"/>
</dbReference>
<dbReference type="RefSeq" id="WP_014232231.1">
    <property type="nucleotide sequence ID" value="NC_016613.1"/>
</dbReference>
<dbReference type="PDB" id="5XD7">
    <property type="method" value="X-ray"/>
    <property type="resolution" value="2.20 A"/>
    <property type="chains" value="A=1-362"/>
</dbReference>
<dbReference type="PDB" id="5XD8">
    <property type="method" value="X-ray"/>
    <property type="resolution" value="2.50 A"/>
    <property type="chains" value="A/B=1-362"/>
</dbReference>
<dbReference type="PDB" id="5XD9">
    <property type="method" value="X-ray"/>
    <property type="resolution" value="2.60 A"/>
    <property type="chains" value="A=1-362"/>
</dbReference>
<dbReference type="PDBsum" id="5XD7"/>
<dbReference type="PDBsum" id="5XD8"/>
<dbReference type="PDBsum" id="5XD9"/>
<dbReference type="SMR" id="H2IFX0"/>
<dbReference type="KEGG" id="vej:VEJY3_09370"/>
<dbReference type="PATRIC" id="fig|1116375.3.peg.1874"/>
<dbReference type="eggNOG" id="COG4948">
    <property type="taxonomic scope" value="Bacteria"/>
</dbReference>
<dbReference type="HOGENOM" id="CLU_030273_3_1_6"/>
<dbReference type="BioCyc" id="MetaCyc:MONOMER-18903"/>
<dbReference type="BRENDA" id="5.5.1.25">
    <property type="organism ID" value="6640"/>
</dbReference>
<dbReference type="Proteomes" id="UP000006799">
    <property type="component" value="Chromosome 1"/>
</dbReference>
<dbReference type="GO" id="GO:0016836">
    <property type="term" value="F:hydro-lyase activity"/>
    <property type="evidence" value="ECO:0007669"/>
    <property type="project" value="TreeGrafter"/>
</dbReference>
<dbReference type="GO" id="GO:0016853">
    <property type="term" value="F:isomerase activity"/>
    <property type="evidence" value="ECO:0007669"/>
    <property type="project" value="UniProtKB-KW"/>
</dbReference>
<dbReference type="GO" id="GO:0000287">
    <property type="term" value="F:magnesium ion binding"/>
    <property type="evidence" value="ECO:0007669"/>
    <property type="project" value="TreeGrafter"/>
</dbReference>
<dbReference type="GO" id="GO:0019388">
    <property type="term" value="P:galactose catabolic process"/>
    <property type="evidence" value="ECO:0007669"/>
    <property type="project" value="InterPro"/>
</dbReference>
<dbReference type="CDD" id="cd03316">
    <property type="entry name" value="MR_like"/>
    <property type="match status" value="1"/>
</dbReference>
<dbReference type="Gene3D" id="3.20.20.120">
    <property type="entry name" value="Enolase-like C-terminal domain"/>
    <property type="match status" value="1"/>
</dbReference>
<dbReference type="Gene3D" id="3.30.390.10">
    <property type="entry name" value="Enolase-like, N-terminal domain"/>
    <property type="match status" value="1"/>
</dbReference>
<dbReference type="InterPro" id="IPR034382">
    <property type="entry name" value="AHGA_cycloisomerase"/>
</dbReference>
<dbReference type="InterPro" id="IPR036849">
    <property type="entry name" value="Enolase-like_C_sf"/>
</dbReference>
<dbReference type="InterPro" id="IPR029017">
    <property type="entry name" value="Enolase-like_N"/>
</dbReference>
<dbReference type="InterPro" id="IPR029065">
    <property type="entry name" value="Enolase_C-like"/>
</dbReference>
<dbReference type="InterPro" id="IPR013342">
    <property type="entry name" value="Mandelate_racemase_C"/>
</dbReference>
<dbReference type="InterPro" id="IPR013341">
    <property type="entry name" value="Mandelate_racemase_N_dom"/>
</dbReference>
<dbReference type="InterPro" id="IPR046945">
    <property type="entry name" value="RHMD-like"/>
</dbReference>
<dbReference type="PANTHER" id="PTHR13794">
    <property type="entry name" value="ENOLASE SUPERFAMILY, MANDELATE RACEMASE"/>
    <property type="match status" value="1"/>
</dbReference>
<dbReference type="PANTHER" id="PTHR13794:SF58">
    <property type="entry name" value="MITOCHONDRIAL ENOLASE SUPERFAMILY MEMBER 1"/>
    <property type="match status" value="1"/>
</dbReference>
<dbReference type="Pfam" id="PF13378">
    <property type="entry name" value="MR_MLE_C"/>
    <property type="match status" value="1"/>
</dbReference>
<dbReference type="Pfam" id="PF02746">
    <property type="entry name" value="MR_MLE_N"/>
    <property type="match status" value="1"/>
</dbReference>
<dbReference type="SFLD" id="SFLDF00557">
    <property type="entry name" value="3_6-anhydro-alpha-L-galactonat"/>
    <property type="match status" value="1"/>
</dbReference>
<dbReference type="SFLD" id="SFLDS00001">
    <property type="entry name" value="Enolase"/>
    <property type="match status" value="1"/>
</dbReference>
<dbReference type="SMART" id="SM00922">
    <property type="entry name" value="MR_MLE"/>
    <property type="match status" value="1"/>
</dbReference>
<dbReference type="SUPFAM" id="SSF51604">
    <property type="entry name" value="Enolase C-terminal domain-like"/>
    <property type="match status" value="1"/>
</dbReference>
<dbReference type="SUPFAM" id="SSF54826">
    <property type="entry name" value="Enolase N-terminal domain-like"/>
    <property type="match status" value="1"/>
</dbReference>
<gene>
    <name evidence="3" type="primary">Vejaci</name>
    <name evidence="6" type="ORF">VEJY3_09370</name>
</gene>
<keyword id="KW-0002">3D-structure</keyword>
<keyword id="KW-0119">Carbohydrate metabolism</keyword>
<keyword id="KW-0413">Isomerase</keyword>
<keyword id="KW-0460">Magnesium</keyword>
<keyword id="KW-0479">Metal-binding</keyword>
<sequence length="362" mass="40448">MKTTIKDIKTRLFKIPLKEILSDAKHGDHDHFELITTTVTLEDGSQGTGYTYTGGKGGYSIKAMLEYDIQPALIGKDATQIEEIYDFMEWHIHYVGRGGISTFAMSAVDIALWDLKGKREGLPLWKMAGGKNNTCKAYCGGIDLQFPLEKLLNNICGYLESGFNAVKIKIGRENMQEDIDRIKAVRELIGPDITFMIDANYSLTVEQAIKLSKAVEQYDITWFEEPTLPDDYKGFAEIADNTAIPLAMGENLHTIHEFGYAMDQAKLGYCQPDASNCGGITGWLKAADLITEHNIPVCTHGMQELHVSLVSAFDTGWLEVHSFPIDEYTKRPLVVENFRAVASNEPGIGVEFDWDKIAQYEV</sequence>
<evidence type="ECO:0000250" key="1">
    <source>
        <dbReference type="UniProtKB" id="Q8ZL58"/>
    </source>
</evidence>
<evidence type="ECO:0000269" key="2">
    <source>
    </source>
</evidence>
<evidence type="ECO:0000303" key="3">
    <source>
    </source>
</evidence>
<evidence type="ECO:0000305" key="4"/>
<evidence type="ECO:0000305" key="5">
    <source>
    </source>
</evidence>
<evidence type="ECO:0000312" key="6">
    <source>
        <dbReference type="EMBL" id="AEX22356.1"/>
    </source>
</evidence>
<evidence type="ECO:0007829" key="7">
    <source>
        <dbReference type="PDB" id="5XD7"/>
    </source>
</evidence>
<evidence type="ECO:0007829" key="8">
    <source>
        <dbReference type="PDB" id="5XD8"/>
    </source>
</evidence>